<organism>
    <name type="scientific">Drosophila melanogaster</name>
    <name type="common">Fruit fly</name>
    <dbReference type="NCBI Taxonomy" id="7227"/>
    <lineage>
        <taxon>Eukaryota</taxon>
        <taxon>Metazoa</taxon>
        <taxon>Ecdysozoa</taxon>
        <taxon>Arthropoda</taxon>
        <taxon>Hexapoda</taxon>
        <taxon>Insecta</taxon>
        <taxon>Pterygota</taxon>
        <taxon>Neoptera</taxon>
        <taxon>Endopterygota</taxon>
        <taxon>Diptera</taxon>
        <taxon>Brachycera</taxon>
        <taxon>Muscomorpha</taxon>
        <taxon>Ephydroidea</taxon>
        <taxon>Drosophilidae</taxon>
        <taxon>Drosophila</taxon>
        <taxon>Sophophora</taxon>
    </lineage>
</organism>
<name>MCM2_DROME</name>
<gene>
    <name type="primary">Mcm2</name>
    <name type="ORF">CG7538</name>
</gene>
<proteinExistence type="evidence at protein level"/>
<evidence type="ECO:0000250" key="1">
    <source>
        <dbReference type="UniProtKB" id="P25205"/>
    </source>
</evidence>
<evidence type="ECO:0000250" key="2">
    <source>
        <dbReference type="UniProtKB" id="P49736"/>
    </source>
</evidence>
<evidence type="ECO:0000255" key="3"/>
<evidence type="ECO:0000256" key="4">
    <source>
        <dbReference type="SAM" id="MobiDB-lite"/>
    </source>
</evidence>
<evidence type="ECO:0000269" key="5">
    <source>
    </source>
</evidence>
<evidence type="ECO:0000269" key="6">
    <source>
    </source>
</evidence>
<evidence type="ECO:0000269" key="7">
    <source>
    </source>
</evidence>
<evidence type="ECO:0000269" key="8">
    <source>
    </source>
</evidence>
<evidence type="ECO:0000269" key="9">
    <source>
    </source>
</evidence>
<evidence type="ECO:0000269" key="10">
    <source>
    </source>
</evidence>
<evidence type="ECO:0000269" key="11">
    <source>
    </source>
</evidence>
<evidence type="ECO:0000269" key="12">
    <source>
    </source>
</evidence>
<evidence type="ECO:0000305" key="13"/>
<reference key="1">
    <citation type="journal article" date="1995" name="Genes Dev.">
        <title>Cell proliferation and DNA replication defects in a Drosophila MCM2 mutant.</title>
        <authorList>
            <person name="Treisman J.E."/>
            <person name="Follette P.J."/>
            <person name="O'Farrell P.H."/>
            <person name="Rubin G.M."/>
        </authorList>
    </citation>
    <scope>NUCLEOTIDE SEQUENCE [MRNA]</scope>
    <scope>FUNCTION</scope>
    <source>
        <tissue>Eye-antennal disk</tissue>
    </source>
</reference>
<reference key="2">
    <citation type="journal article" date="2000" name="Science">
        <title>The genome sequence of Drosophila melanogaster.</title>
        <authorList>
            <person name="Adams M.D."/>
            <person name="Celniker S.E."/>
            <person name="Holt R.A."/>
            <person name="Evans C.A."/>
            <person name="Gocayne J.D."/>
            <person name="Amanatides P.G."/>
            <person name="Scherer S.E."/>
            <person name="Li P.W."/>
            <person name="Hoskins R.A."/>
            <person name="Galle R.F."/>
            <person name="George R.A."/>
            <person name="Lewis S.E."/>
            <person name="Richards S."/>
            <person name="Ashburner M."/>
            <person name="Henderson S.N."/>
            <person name="Sutton G.G."/>
            <person name="Wortman J.R."/>
            <person name="Yandell M.D."/>
            <person name="Zhang Q."/>
            <person name="Chen L.X."/>
            <person name="Brandon R.C."/>
            <person name="Rogers Y.-H.C."/>
            <person name="Blazej R.G."/>
            <person name="Champe M."/>
            <person name="Pfeiffer B.D."/>
            <person name="Wan K.H."/>
            <person name="Doyle C."/>
            <person name="Baxter E.G."/>
            <person name="Helt G."/>
            <person name="Nelson C.R."/>
            <person name="Miklos G.L.G."/>
            <person name="Abril J.F."/>
            <person name="Agbayani A."/>
            <person name="An H.-J."/>
            <person name="Andrews-Pfannkoch C."/>
            <person name="Baldwin D."/>
            <person name="Ballew R.M."/>
            <person name="Basu A."/>
            <person name="Baxendale J."/>
            <person name="Bayraktaroglu L."/>
            <person name="Beasley E.M."/>
            <person name="Beeson K.Y."/>
            <person name="Benos P.V."/>
            <person name="Berman B.P."/>
            <person name="Bhandari D."/>
            <person name="Bolshakov S."/>
            <person name="Borkova D."/>
            <person name="Botchan M.R."/>
            <person name="Bouck J."/>
            <person name="Brokstein P."/>
            <person name="Brottier P."/>
            <person name="Burtis K.C."/>
            <person name="Busam D.A."/>
            <person name="Butler H."/>
            <person name="Cadieu E."/>
            <person name="Center A."/>
            <person name="Chandra I."/>
            <person name="Cherry J.M."/>
            <person name="Cawley S."/>
            <person name="Dahlke C."/>
            <person name="Davenport L.B."/>
            <person name="Davies P."/>
            <person name="de Pablos B."/>
            <person name="Delcher A."/>
            <person name="Deng Z."/>
            <person name="Mays A.D."/>
            <person name="Dew I."/>
            <person name="Dietz S.M."/>
            <person name="Dodson K."/>
            <person name="Doup L.E."/>
            <person name="Downes M."/>
            <person name="Dugan-Rocha S."/>
            <person name="Dunkov B.C."/>
            <person name="Dunn P."/>
            <person name="Durbin K.J."/>
            <person name="Evangelista C.C."/>
            <person name="Ferraz C."/>
            <person name="Ferriera S."/>
            <person name="Fleischmann W."/>
            <person name="Fosler C."/>
            <person name="Gabrielian A.E."/>
            <person name="Garg N.S."/>
            <person name="Gelbart W.M."/>
            <person name="Glasser K."/>
            <person name="Glodek A."/>
            <person name="Gong F."/>
            <person name="Gorrell J.H."/>
            <person name="Gu Z."/>
            <person name="Guan P."/>
            <person name="Harris M."/>
            <person name="Harris N.L."/>
            <person name="Harvey D.A."/>
            <person name="Heiman T.J."/>
            <person name="Hernandez J.R."/>
            <person name="Houck J."/>
            <person name="Hostin D."/>
            <person name="Houston K.A."/>
            <person name="Howland T.J."/>
            <person name="Wei M.-H."/>
            <person name="Ibegwam C."/>
            <person name="Jalali M."/>
            <person name="Kalush F."/>
            <person name="Karpen G.H."/>
            <person name="Ke Z."/>
            <person name="Kennison J.A."/>
            <person name="Ketchum K.A."/>
            <person name="Kimmel B.E."/>
            <person name="Kodira C.D."/>
            <person name="Kraft C.L."/>
            <person name="Kravitz S."/>
            <person name="Kulp D."/>
            <person name="Lai Z."/>
            <person name="Lasko P."/>
            <person name="Lei Y."/>
            <person name="Levitsky A.A."/>
            <person name="Li J.H."/>
            <person name="Li Z."/>
            <person name="Liang Y."/>
            <person name="Lin X."/>
            <person name="Liu X."/>
            <person name="Mattei B."/>
            <person name="McIntosh T.C."/>
            <person name="McLeod M.P."/>
            <person name="McPherson D."/>
            <person name="Merkulov G."/>
            <person name="Milshina N.V."/>
            <person name="Mobarry C."/>
            <person name="Morris J."/>
            <person name="Moshrefi A."/>
            <person name="Mount S.M."/>
            <person name="Moy M."/>
            <person name="Murphy B."/>
            <person name="Murphy L."/>
            <person name="Muzny D.M."/>
            <person name="Nelson D.L."/>
            <person name="Nelson D.R."/>
            <person name="Nelson K.A."/>
            <person name="Nixon K."/>
            <person name="Nusskern D.R."/>
            <person name="Pacleb J.M."/>
            <person name="Palazzolo M."/>
            <person name="Pittman G.S."/>
            <person name="Pan S."/>
            <person name="Pollard J."/>
            <person name="Puri V."/>
            <person name="Reese M.G."/>
            <person name="Reinert K."/>
            <person name="Remington K."/>
            <person name="Saunders R.D.C."/>
            <person name="Scheeler F."/>
            <person name="Shen H."/>
            <person name="Shue B.C."/>
            <person name="Siden-Kiamos I."/>
            <person name="Simpson M."/>
            <person name="Skupski M.P."/>
            <person name="Smith T.J."/>
            <person name="Spier E."/>
            <person name="Spradling A.C."/>
            <person name="Stapleton M."/>
            <person name="Strong R."/>
            <person name="Sun E."/>
            <person name="Svirskas R."/>
            <person name="Tector C."/>
            <person name="Turner R."/>
            <person name="Venter E."/>
            <person name="Wang A.H."/>
            <person name="Wang X."/>
            <person name="Wang Z.-Y."/>
            <person name="Wassarman D.A."/>
            <person name="Weinstock G.M."/>
            <person name="Weissenbach J."/>
            <person name="Williams S.M."/>
            <person name="Woodage T."/>
            <person name="Worley K.C."/>
            <person name="Wu D."/>
            <person name="Yang S."/>
            <person name="Yao Q.A."/>
            <person name="Ye J."/>
            <person name="Yeh R.-F."/>
            <person name="Zaveri J.S."/>
            <person name="Zhan M."/>
            <person name="Zhang G."/>
            <person name="Zhao Q."/>
            <person name="Zheng L."/>
            <person name="Zheng X.H."/>
            <person name="Zhong F.N."/>
            <person name="Zhong W."/>
            <person name="Zhou X."/>
            <person name="Zhu S.C."/>
            <person name="Zhu X."/>
            <person name="Smith H.O."/>
            <person name="Gibbs R.A."/>
            <person name="Myers E.W."/>
            <person name="Rubin G.M."/>
            <person name="Venter J.C."/>
        </authorList>
    </citation>
    <scope>NUCLEOTIDE SEQUENCE [LARGE SCALE GENOMIC DNA]</scope>
    <source>
        <strain>Berkeley</strain>
    </source>
</reference>
<reference key="3">
    <citation type="journal article" date="2002" name="Genome Biol.">
        <title>Annotation of the Drosophila melanogaster euchromatic genome: a systematic review.</title>
        <authorList>
            <person name="Misra S."/>
            <person name="Crosby M.A."/>
            <person name="Mungall C.J."/>
            <person name="Matthews B.B."/>
            <person name="Campbell K.S."/>
            <person name="Hradecky P."/>
            <person name="Huang Y."/>
            <person name="Kaminker J.S."/>
            <person name="Millburn G.H."/>
            <person name="Prochnik S.E."/>
            <person name="Smith C.D."/>
            <person name="Tupy J.L."/>
            <person name="Whitfield E.J."/>
            <person name="Bayraktaroglu L."/>
            <person name="Berman B.P."/>
            <person name="Bettencourt B.R."/>
            <person name="Celniker S.E."/>
            <person name="de Grey A.D.N.J."/>
            <person name="Drysdale R.A."/>
            <person name="Harris N.L."/>
            <person name="Richter J."/>
            <person name="Russo S."/>
            <person name="Schroeder A.J."/>
            <person name="Shu S.Q."/>
            <person name="Stapleton M."/>
            <person name="Yamada C."/>
            <person name="Ashburner M."/>
            <person name="Gelbart W.M."/>
            <person name="Rubin G.M."/>
            <person name="Lewis S.E."/>
        </authorList>
    </citation>
    <scope>GENOME REANNOTATION</scope>
    <source>
        <strain>Berkeley</strain>
    </source>
</reference>
<reference key="4">
    <citation type="journal article" date="2002" name="Genome Biol.">
        <title>A Drosophila full-length cDNA resource.</title>
        <authorList>
            <person name="Stapleton M."/>
            <person name="Carlson J.W."/>
            <person name="Brokstein P."/>
            <person name="Yu C."/>
            <person name="Champe M."/>
            <person name="George R.A."/>
            <person name="Guarin H."/>
            <person name="Kronmiller B."/>
            <person name="Pacleb J.M."/>
            <person name="Park S."/>
            <person name="Wan K.H."/>
            <person name="Rubin G.M."/>
            <person name="Celniker S.E."/>
        </authorList>
    </citation>
    <scope>NUCLEOTIDE SEQUENCE [LARGE SCALE MRNA]</scope>
    <source>
        <strain>Berkeley</strain>
        <tissue>Embryo</tissue>
    </source>
</reference>
<reference key="5">
    <citation type="journal article" date="2002" name="Mol. Biol. Cell">
        <title>Drosophila minichromosome maintenance 6 is required for chorion gene amplification and genomic replication.</title>
        <authorList>
            <person name="Schwed G."/>
            <person name="May N."/>
            <person name="Pechersky Y."/>
            <person name="Calvi B.R."/>
        </authorList>
    </citation>
    <scope>INTERACTION WITH MCM6</scope>
</reference>
<reference key="6">
    <citation type="journal article" date="2003" name="Mol. Biol. Cell">
        <title>Drosophila MCM10 interacts with members of the prereplication complex and is required for proper chromosome condensation.</title>
        <authorList>
            <person name="Christensen T.W."/>
            <person name="Tye B.K."/>
        </authorList>
    </citation>
    <scope>INTERACTION WITH MCM10</scope>
</reference>
<reference key="7">
    <citation type="journal article" date="2006" name="Proc. Natl. Acad. Sci. U.S.A.">
        <title>Isolation of the Cdc45/Mcm2-7/GINS (CMG) complex, a candidate for the eukaryotic DNA replication fork helicase.</title>
        <authorList>
            <person name="Moyer S.E."/>
            <person name="Lewis P.W."/>
            <person name="Botchan M.R."/>
        </authorList>
    </citation>
    <scope>IDENTIFICATION IN THE MCM2-7 COMPLEX</scope>
    <scope>FUNCTION OF THE MCM2-7 COMPLEX</scope>
</reference>
<reference key="8">
    <citation type="journal article" date="2007" name="Mol. Biosyst.">
        <title>An integrated chemical, mass spectrometric and computational strategy for (quantitative) phosphoproteomics: application to Drosophila melanogaster Kc167 cells.</title>
        <authorList>
            <person name="Bodenmiller B."/>
            <person name="Mueller L.N."/>
            <person name="Pedrioli P.G.A."/>
            <person name="Pflieger D."/>
            <person name="Juenger M.A."/>
            <person name="Eng J.K."/>
            <person name="Aebersold R."/>
            <person name="Tao W.A."/>
        </authorList>
    </citation>
    <scope>PHOSPHORYLATION [LARGE SCALE ANALYSIS] AT THR-26; SER-27 AND SER-124</scope>
    <scope>IDENTIFICATION BY MASS SPECTROMETRY</scope>
</reference>
<reference key="9">
    <citation type="journal article" date="2008" name="J. Proteome Res.">
        <title>Phosphoproteome analysis of Drosophila melanogaster embryos.</title>
        <authorList>
            <person name="Zhai B."/>
            <person name="Villen J."/>
            <person name="Beausoleil S.A."/>
            <person name="Mintseris J."/>
            <person name="Gygi S.P."/>
        </authorList>
    </citation>
    <scope>PHOSPHORYLATION [LARGE SCALE ANALYSIS] AT SER-89 AND SER-92</scope>
    <scope>IDENTIFICATION BY MASS SPECTROMETRY</scope>
    <source>
        <tissue>Embryo</tissue>
    </source>
</reference>
<reference key="10">
    <citation type="journal article" date="2010" name="Mol. Cell">
        <title>Activation of the MCM2-7 helicase by association with Cdc45 and GINS proteins.</title>
        <authorList>
            <person name="Ilves I."/>
            <person name="Petojevic T."/>
            <person name="Pesavento J.J."/>
            <person name="Botchan M.R."/>
        </authorList>
    </citation>
    <scope>RECONSTITUTION OF THE MCM2-7 COMPLEX</scope>
    <scope>FUNCTION OF THE MCM2-7 COMPLEX</scope>
    <scope>MUTAGENESIS OF LYS-514</scope>
</reference>
<reference key="11">
    <citation type="journal article" date="2015" name="J. Biol. Chem.">
        <title>Characterization of a Drosophila ortholog of the Cdc7 kinase: a role for Cdc7 in endoreplication independent of Chiffon.</title>
        <authorList>
            <person name="Stephenson R."/>
            <person name="Hosler M.R."/>
            <person name="Gavande N.S."/>
            <person name="Ghosh A.K."/>
            <person name="Weake V.M."/>
        </authorList>
    </citation>
    <scope>PHOSPHORYLATION</scope>
</reference>
<protein>
    <recommendedName>
        <fullName>DNA replication licensing factor Mcm2</fullName>
        <ecNumber evidence="2">3.6.4.12</ecNumber>
    </recommendedName>
    <alternativeName>
        <fullName>Minichromosome maintenance 2 protein</fullName>
        <shortName>DmMCM2</shortName>
    </alternativeName>
</protein>
<keyword id="KW-0002">3D-structure</keyword>
<keyword id="KW-0067">ATP-binding</keyword>
<keyword id="KW-0131">Cell cycle</keyword>
<keyword id="KW-0132">Cell division</keyword>
<keyword id="KW-0158">Chromosome</keyword>
<keyword id="KW-0235">DNA replication</keyword>
<keyword id="KW-0238">DNA-binding</keyword>
<keyword id="KW-0347">Helicase</keyword>
<keyword id="KW-0378">Hydrolase</keyword>
<keyword id="KW-0479">Metal-binding</keyword>
<keyword id="KW-0547">Nucleotide-binding</keyword>
<keyword id="KW-0539">Nucleus</keyword>
<keyword id="KW-0597">Phosphoprotein</keyword>
<keyword id="KW-1185">Reference proteome</keyword>
<keyword id="KW-0862">Zinc</keyword>
<keyword id="KW-0863">Zinc-finger</keyword>
<dbReference type="EC" id="3.6.4.12" evidence="2"/>
<dbReference type="EMBL" id="L42762">
    <property type="protein sequence ID" value="AAB36617.1"/>
    <property type="molecule type" value="mRNA"/>
</dbReference>
<dbReference type="EMBL" id="AE014297">
    <property type="protein sequence ID" value="AAF54207.1"/>
    <property type="molecule type" value="Genomic_DNA"/>
</dbReference>
<dbReference type="EMBL" id="AY069702">
    <property type="protein sequence ID" value="AAL39847.1"/>
    <property type="molecule type" value="mRNA"/>
</dbReference>
<dbReference type="RefSeq" id="NP_477121.1">
    <property type="nucleotide sequence ID" value="NM_057773.4"/>
</dbReference>
<dbReference type="PDB" id="6RAW">
    <property type="method" value="EM"/>
    <property type="resolution" value="3.70 A"/>
    <property type="chains" value="2=1-887"/>
</dbReference>
<dbReference type="PDB" id="6RAX">
    <property type="method" value="EM"/>
    <property type="resolution" value="3.99 A"/>
    <property type="chains" value="2=1-887"/>
</dbReference>
<dbReference type="PDB" id="6RAY">
    <property type="method" value="EM"/>
    <property type="resolution" value="4.28 A"/>
    <property type="chains" value="2=1-887"/>
</dbReference>
<dbReference type="PDB" id="6RAZ">
    <property type="method" value="EM"/>
    <property type="resolution" value="4.46 A"/>
    <property type="chains" value="2=1-887"/>
</dbReference>
<dbReference type="PDBsum" id="6RAW"/>
<dbReference type="PDBsum" id="6RAX"/>
<dbReference type="PDBsum" id="6RAY"/>
<dbReference type="PDBsum" id="6RAZ"/>
<dbReference type="EMDB" id="EMD-2772"/>
<dbReference type="EMDB" id="EMD-3318"/>
<dbReference type="EMDB" id="EMD-3319"/>
<dbReference type="EMDB" id="EMD-3320"/>
<dbReference type="EMDB" id="EMD-3321"/>
<dbReference type="EMDB" id="EMD-4785"/>
<dbReference type="EMDB" id="EMD-4786"/>
<dbReference type="EMDB" id="EMD-4787"/>
<dbReference type="EMDB" id="EMD-4788"/>
<dbReference type="SMR" id="P49735"/>
<dbReference type="BioGRID" id="66154">
    <property type="interactions" value="17"/>
</dbReference>
<dbReference type="ComplexPortal" id="CPX-2942">
    <property type="entry name" value="MCM complex"/>
</dbReference>
<dbReference type="DIP" id="DIP-22529N"/>
<dbReference type="FunCoup" id="P49735">
    <property type="interactions" value="1397"/>
</dbReference>
<dbReference type="IntAct" id="P49735">
    <property type="interactions" value="55"/>
</dbReference>
<dbReference type="STRING" id="7227.FBpp0081317"/>
<dbReference type="iPTMnet" id="P49735"/>
<dbReference type="PaxDb" id="7227-FBpp0081317"/>
<dbReference type="EnsemblMetazoa" id="FBtr0081827">
    <property type="protein sequence ID" value="FBpp0081317"/>
    <property type="gene ID" value="FBgn0014861"/>
</dbReference>
<dbReference type="GeneID" id="40973"/>
<dbReference type="KEGG" id="dme:Dmel_CG7538"/>
<dbReference type="AGR" id="FB:FBgn0014861"/>
<dbReference type="CTD" id="4171"/>
<dbReference type="FlyBase" id="FBgn0014861">
    <property type="gene designation" value="Mcm2"/>
</dbReference>
<dbReference type="VEuPathDB" id="VectorBase:FBgn0014861"/>
<dbReference type="eggNOG" id="KOG0477">
    <property type="taxonomic scope" value="Eukaryota"/>
</dbReference>
<dbReference type="GeneTree" id="ENSGT01050000244824"/>
<dbReference type="HOGENOM" id="CLU_000995_0_1_1"/>
<dbReference type="InParanoid" id="P49735"/>
<dbReference type="OMA" id="TYERVTT"/>
<dbReference type="OrthoDB" id="844at2759"/>
<dbReference type="PhylomeDB" id="P49735"/>
<dbReference type="Reactome" id="R-DME-176187">
    <property type="pathway name" value="Activation of ATR in response to replication stress"/>
</dbReference>
<dbReference type="Reactome" id="R-DME-68867">
    <property type="pathway name" value="Assembly of the pre-replicative complex"/>
</dbReference>
<dbReference type="Reactome" id="R-DME-68949">
    <property type="pathway name" value="Orc1 removal from chromatin"/>
</dbReference>
<dbReference type="Reactome" id="R-DME-68962">
    <property type="pathway name" value="Activation of the pre-replicative complex"/>
</dbReference>
<dbReference type="Reactome" id="R-DME-69052">
    <property type="pathway name" value="Switching of origins to a post-replicative state"/>
</dbReference>
<dbReference type="BioGRID-ORCS" id="40973">
    <property type="hits" value="0 hits in 1 CRISPR screen"/>
</dbReference>
<dbReference type="GenomeRNAi" id="40973"/>
<dbReference type="PRO" id="PR:P49735"/>
<dbReference type="Proteomes" id="UP000000803">
    <property type="component" value="Chromosome 3R"/>
</dbReference>
<dbReference type="Bgee" id="FBgn0014861">
    <property type="expression patterns" value="Expressed in secondary oocyte and 46 other cell types or tissues"/>
</dbReference>
<dbReference type="GO" id="GO:0071162">
    <property type="term" value="C:CMG complex"/>
    <property type="evidence" value="ECO:0000314"/>
    <property type="project" value="FlyBase"/>
</dbReference>
<dbReference type="GO" id="GO:0042555">
    <property type="term" value="C:MCM complex"/>
    <property type="evidence" value="ECO:0000314"/>
    <property type="project" value="FlyBase"/>
</dbReference>
<dbReference type="GO" id="GO:0005634">
    <property type="term" value="C:nucleus"/>
    <property type="evidence" value="ECO:0000318"/>
    <property type="project" value="GO_Central"/>
</dbReference>
<dbReference type="GO" id="GO:0005524">
    <property type="term" value="F:ATP binding"/>
    <property type="evidence" value="ECO:0007669"/>
    <property type="project" value="UniProtKB-KW"/>
</dbReference>
<dbReference type="GO" id="GO:0016887">
    <property type="term" value="F:ATP hydrolysis activity"/>
    <property type="evidence" value="ECO:0007669"/>
    <property type="project" value="RHEA"/>
</dbReference>
<dbReference type="GO" id="GO:0004386">
    <property type="term" value="F:helicase activity"/>
    <property type="evidence" value="ECO:0007669"/>
    <property type="project" value="UniProtKB-KW"/>
</dbReference>
<dbReference type="GO" id="GO:0003697">
    <property type="term" value="F:single-stranded DNA binding"/>
    <property type="evidence" value="ECO:0000318"/>
    <property type="project" value="GO_Central"/>
</dbReference>
<dbReference type="GO" id="GO:0008270">
    <property type="term" value="F:zinc ion binding"/>
    <property type="evidence" value="ECO:0007669"/>
    <property type="project" value="UniProtKB-KW"/>
</dbReference>
<dbReference type="GO" id="GO:0051301">
    <property type="term" value="P:cell division"/>
    <property type="evidence" value="ECO:0007669"/>
    <property type="project" value="UniProtKB-KW"/>
</dbReference>
<dbReference type="GO" id="GO:0030261">
    <property type="term" value="P:chromosome condensation"/>
    <property type="evidence" value="ECO:0000315"/>
    <property type="project" value="FlyBase"/>
</dbReference>
<dbReference type="GO" id="GO:0006260">
    <property type="term" value="P:DNA replication"/>
    <property type="evidence" value="ECO:0000318"/>
    <property type="project" value="GO_Central"/>
</dbReference>
<dbReference type="GO" id="GO:0000727">
    <property type="term" value="P:double-strand break repair via break-induced replication"/>
    <property type="evidence" value="ECO:0000318"/>
    <property type="project" value="GO_Central"/>
</dbReference>
<dbReference type="GO" id="GO:1902975">
    <property type="term" value="P:mitotic DNA replication initiation"/>
    <property type="evidence" value="ECO:0000318"/>
    <property type="project" value="GO_Central"/>
</dbReference>
<dbReference type="GO" id="GO:0006279">
    <property type="term" value="P:premeiotic DNA replication"/>
    <property type="evidence" value="ECO:0000303"/>
    <property type="project" value="ComplexPortal"/>
</dbReference>
<dbReference type="CDD" id="cd17753">
    <property type="entry name" value="MCM2"/>
    <property type="match status" value="1"/>
</dbReference>
<dbReference type="FunFam" id="2.20.28.10:FF:000002">
    <property type="entry name" value="DNA helicase"/>
    <property type="match status" value="1"/>
</dbReference>
<dbReference type="FunFam" id="3.30.1640.10:FF:000020">
    <property type="entry name" value="DNA helicase"/>
    <property type="match status" value="1"/>
</dbReference>
<dbReference type="FunFam" id="3.40.50.300:FF:000138">
    <property type="entry name" value="DNA helicase"/>
    <property type="match status" value="1"/>
</dbReference>
<dbReference type="Gene3D" id="2.20.28.10">
    <property type="match status" value="1"/>
</dbReference>
<dbReference type="Gene3D" id="3.30.1640.10">
    <property type="entry name" value="mini-chromosome maintenance (MCM) complex, chain A, domain 1"/>
    <property type="match status" value="1"/>
</dbReference>
<dbReference type="Gene3D" id="2.40.50.140">
    <property type="entry name" value="Nucleic acid-binding proteins"/>
    <property type="match status" value="1"/>
</dbReference>
<dbReference type="Gene3D" id="3.40.50.300">
    <property type="entry name" value="P-loop containing nucleotide triphosphate hydrolases"/>
    <property type="match status" value="1"/>
</dbReference>
<dbReference type="InterPro" id="IPR031327">
    <property type="entry name" value="MCM"/>
</dbReference>
<dbReference type="InterPro" id="IPR008045">
    <property type="entry name" value="MCM2"/>
</dbReference>
<dbReference type="InterPro" id="IPR018525">
    <property type="entry name" value="MCM_CS"/>
</dbReference>
<dbReference type="InterPro" id="IPR001208">
    <property type="entry name" value="MCM_dom"/>
</dbReference>
<dbReference type="InterPro" id="IPR041562">
    <property type="entry name" value="MCM_lid"/>
</dbReference>
<dbReference type="InterPro" id="IPR027925">
    <property type="entry name" value="MCM_N"/>
</dbReference>
<dbReference type="InterPro" id="IPR033762">
    <property type="entry name" value="MCM_OB"/>
</dbReference>
<dbReference type="InterPro" id="IPR012340">
    <property type="entry name" value="NA-bd_OB-fold"/>
</dbReference>
<dbReference type="InterPro" id="IPR027417">
    <property type="entry name" value="P-loop_NTPase"/>
</dbReference>
<dbReference type="PANTHER" id="PTHR11630">
    <property type="entry name" value="DNA REPLICATION LICENSING FACTOR MCM FAMILY MEMBER"/>
    <property type="match status" value="1"/>
</dbReference>
<dbReference type="PANTHER" id="PTHR11630:SF44">
    <property type="entry name" value="DNA REPLICATION LICENSING FACTOR MCM2"/>
    <property type="match status" value="1"/>
</dbReference>
<dbReference type="Pfam" id="PF00493">
    <property type="entry name" value="MCM"/>
    <property type="match status" value="1"/>
</dbReference>
<dbReference type="Pfam" id="PF12619">
    <property type="entry name" value="MCM2_N"/>
    <property type="match status" value="1"/>
</dbReference>
<dbReference type="Pfam" id="PF17855">
    <property type="entry name" value="MCM_lid"/>
    <property type="match status" value="1"/>
</dbReference>
<dbReference type="Pfam" id="PF14551">
    <property type="entry name" value="MCM_N"/>
    <property type="match status" value="1"/>
</dbReference>
<dbReference type="Pfam" id="PF17207">
    <property type="entry name" value="MCM_OB"/>
    <property type="match status" value="1"/>
</dbReference>
<dbReference type="Pfam" id="PF23669">
    <property type="entry name" value="WH_MCM2"/>
    <property type="match status" value="1"/>
</dbReference>
<dbReference type="PRINTS" id="PR01657">
    <property type="entry name" value="MCMFAMILY"/>
</dbReference>
<dbReference type="PRINTS" id="PR01658">
    <property type="entry name" value="MCMPROTEIN2"/>
</dbReference>
<dbReference type="SMART" id="SM00350">
    <property type="entry name" value="MCM"/>
    <property type="match status" value="1"/>
</dbReference>
<dbReference type="SUPFAM" id="SSF50249">
    <property type="entry name" value="Nucleic acid-binding proteins"/>
    <property type="match status" value="1"/>
</dbReference>
<dbReference type="SUPFAM" id="SSF52540">
    <property type="entry name" value="P-loop containing nucleoside triphosphate hydrolases"/>
    <property type="match status" value="1"/>
</dbReference>
<dbReference type="PROSITE" id="PS00847">
    <property type="entry name" value="MCM_1"/>
    <property type="match status" value="1"/>
</dbReference>
<dbReference type="PROSITE" id="PS50051">
    <property type="entry name" value="MCM_2"/>
    <property type="match status" value="1"/>
</dbReference>
<comment type="function">
    <text evidence="7 10 12">Acts as a component of the MCM2-7 complex (MCM complex) which is the replicative helicase essential for 'once per cell cycle' DNA replication initiation and elongation in eukaryotic cells. Core component of CDC45-MCM-GINS (CMG) helicase, the molecular machine that unwinds template DNA during replication, and around which the replisome is built. The active ATPase sites in the MCM2-7 ring are formed through the interaction surfaces of two neighboring subunits such that a critical structure of a conserved arginine finger motif is provided in trans relative to the ATP-binding site of the Walker A box of the adjacent subunit. The six ATPase active sites, however, are likely to contribute differentially to the complex helicase activity. Required for the entry in S phase and for cell division.</text>
</comment>
<comment type="catalytic activity">
    <reaction evidence="2">
        <text>ATP + H2O = ADP + phosphate + H(+)</text>
        <dbReference type="Rhea" id="RHEA:13065"/>
        <dbReference type="ChEBI" id="CHEBI:15377"/>
        <dbReference type="ChEBI" id="CHEBI:15378"/>
        <dbReference type="ChEBI" id="CHEBI:30616"/>
        <dbReference type="ChEBI" id="CHEBI:43474"/>
        <dbReference type="ChEBI" id="CHEBI:456216"/>
        <dbReference type="EC" id="3.6.4.12"/>
    </reaction>
    <physiologicalReaction direction="left-to-right" evidence="2">
        <dbReference type="Rhea" id="RHEA:13066"/>
    </physiologicalReaction>
</comment>
<comment type="subunit">
    <text evidence="5 6 7 13">Component of the Mcm2-7 complex. The complex forms a toroidal hexameric ring with the proposed subunit order Mcm2-Mcm6-Mcm4-Mcm7-Mcm3-Mcm5 (Probable). Interacts with Mcm10.</text>
</comment>
<comment type="interaction">
    <interactant intactId="EBI-138228">
        <id>P49735</id>
    </interactant>
    <interactant intactId="EBI-91264">
        <id>Q9VIE6</id>
        <label>Mcm10</label>
    </interactant>
    <organismsDiffer>false</organismsDiffer>
    <experiments>2</experiments>
</comment>
<comment type="interaction">
    <interactant intactId="EBI-138228">
        <id>P49735</id>
    </interactant>
    <interactant intactId="EBI-83298">
        <id>Q9VGW6</id>
        <label>Mcm5</label>
    </interactant>
    <organismsDiffer>false</organismsDiffer>
    <experiments>9</experiments>
</comment>
<comment type="interaction">
    <interactant intactId="EBI-138228">
        <id>P49735</id>
    </interactant>
    <interactant intactId="EBI-869161">
        <id>Q9V461</id>
        <label>Mcm6</label>
    </interactant>
    <organismsDiffer>false</organismsDiffer>
    <experiments>13</experiments>
</comment>
<comment type="subcellular location">
    <subcellularLocation>
        <location evidence="1">Nucleus</location>
    </subcellularLocation>
    <subcellularLocation>
        <location evidence="1">Chromosome</location>
    </subcellularLocation>
    <text evidence="1">Associated with chromatin before the formation of nuclei and detaches from it as DNA replication progresses.</text>
</comment>
<comment type="PTM">
    <text evidence="11">Phosphorylated by the catalytic component of the Dbf4-dependent kinase (DDK) complex Cdc7.</text>
</comment>
<comment type="miscellaneous">
    <text evidence="2">Early fractionation of eukaryotic MCM proteins yielded a variety of dimeric, trimeric and tetrameric complexes with unclear biological significance. Specifically a MCM467 subcomplex is shown to have in vitro helicase activity which is inhibited by the MCM2 subunit. The MCM2-7 hexamer is the proposed physiological active complex.</text>
</comment>
<comment type="similarity">
    <text evidence="13">Belongs to the MCM family.</text>
</comment>
<sequence length="887" mass="100415">MDNPSSPPPNTPSDAAERRDLRAAMTSPVGDFEPFENEDEILGDQTVRDEAEEEDGEELFGDNMENDYRPMPELDHYDPALLDDEDDFSEMSQGDRFAAESEMRRRDRAAGIHRDDRDLGFGQSDDEDDVGPRAKRRAGEKAAVGEVEDTEMVESIENLEDTKGHSTKEWVSMLGPRTEIANRFQSFLRTFVDERGAYTYRDRIRRMCEQNMSSFVVSYTDLANKEHVLAYFLPEAPFQMLEIFDKVAKDMVLSIFPTYERVTTEIHVRISELPLIEELRTFRKLHLNQLVRTLGVVTATTGVLPQLSVIKYDCVKCGYVLGPFVQSQNTEIKPGSCPECQSTGPFSINMEQTLYRNYQKITLQESPGRIPAGRIPRSKDVILLADLCDQCKPGDELEVTGIYTNNYDGSLNTDQGFPVFATVIIANHVVVKDSKQVVQSLTDEDIATIQKLSKDPRIVERVVASMAPSIYGHDYIKRALALALFGGESKNPGEKHKVRGDINLLICGDPGTAKSQFLKYTEKVAPRAVFTTGQGASAVGLTAYVRRNPVSREWTLEAGALVLADQGVCLIDEFDKMNDQDRTSIHEAMEQQSISISKAGIVTSLQARCTVIAAANPIGGRYDPSMTFSENVNLSEPILSRFDVLCVVKDEFDPMQDQQLAKFVVHSHMKHHPSEEEQPELEEPQLKTVDEIPQDLLRQYIVYAKENIRPKLTNIDEDKIAKMYAQLRQESFATGSLPITVRHIESVIRMSEAHARMHLRENVMEADVSMAIRMMLESFIEAQKFSVMKKMRSTFQKYLSFQKDHSELLFFILRQLTLDQLAYIRCKDGPGATHVEIMERDLIERAKQLDIVNLKPFYESDLFRTNGFSYDPKRRIILQIVVDGNTA</sequence>
<accession>P49735</accession>
<accession>Q9VHU2</accession>
<feature type="chain" id="PRO_0000194090" description="DNA replication licensing factor Mcm2">
    <location>
        <begin position="1"/>
        <end position="887"/>
    </location>
</feature>
<feature type="domain" description="MCM">
    <location>
        <begin position="458"/>
        <end position="665"/>
    </location>
</feature>
<feature type="zinc finger region" description="C4-type" evidence="3">
    <location>
        <begin position="314"/>
        <end position="340"/>
    </location>
</feature>
<feature type="region of interest" description="Disordered" evidence="4">
    <location>
        <begin position="1"/>
        <end position="150"/>
    </location>
</feature>
<feature type="short sequence motif" description="Arginine finger">
    <location>
        <begin position="640"/>
        <end position="643"/>
    </location>
</feature>
<feature type="compositionally biased region" description="Pro residues" evidence="4">
    <location>
        <begin position="1"/>
        <end position="11"/>
    </location>
</feature>
<feature type="compositionally biased region" description="Acidic residues" evidence="4">
    <location>
        <begin position="33"/>
        <end position="42"/>
    </location>
</feature>
<feature type="compositionally biased region" description="Acidic residues" evidence="4">
    <location>
        <begin position="50"/>
        <end position="60"/>
    </location>
</feature>
<feature type="compositionally biased region" description="Basic and acidic residues" evidence="4">
    <location>
        <begin position="66"/>
        <end position="78"/>
    </location>
</feature>
<feature type="compositionally biased region" description="Basic and acidic residues" evidence="4">
    <location>
        <begin position="97"/>
        <end position="119"/>
    </location>
</feature>
<feature type="binding site" evidence="2">
    <location>
        <position position="515"/>
    </location>
    <ligand>
        <name>ADP</name>
        <dbReference type="ChEBI" id="CHEBI:456216"/>
        <note>ligand shared with MCM6</note>
    </ligand>
</feature>
<feature type="binding site" evidence="2">
    <location>
        <position position="516"/>
    </location>
    <ligand>
        <name>ADP</name>
        <dbReference type="ChEBI" id="CHEBI:456216"/>
        <note>ligand shared with MCM6</note>
    </ligand>
</feature>
<feature type="modified residue" description="Phosphothreonine" evidence="8">
    <location>
        <position position="26"/>
    </location>
</feature>
<feature type="modified residue" description="Phosphoserine" evidence="8">
    <location>
        <position position="27"/>
    </location>
</feature>
<feature type="modified residue" description="Phosphoserine" evidence="9">
    <location>
        <position position="89"/>
    </location>
</feature>
<feature type="modified residue" description="Phosphoserine" evidence="9">
    <location>
        <position position="92"/>
    </location>
</feature>
<feature type="modified residue" description="Phosphoserine" evidence="8">
    <location>
        <position position="124"/>
    </location>
</feature>
<feature type="mutagenesis site" description="Reduces complex helicase activity." evidence="10">
    <original>K</original>
    <variation>A</variation>
    <location>
        <position position="514"/>
    </location>
</feature>